<accession>Q864I2</accession>
<protein>
    <recommendedName>
        <fullName>Melanocyte-stimulating hormone receptor</fullName>
        <shortName>MSH-R</shortName>
    </recommendedName>
    <alternativeName>
        <fullName>Melanocortin receptor 1</fullName>
        <shortName>MC1-R</shortName>
    </alternativeName>
</protein>
<organism>
    <name type="scientific">Leontopithecus chrysopygus</name>
    <name type="common">Golden-rumped lion tamarin</name>
    <name type="synonym">Leontopithecus rosalia chrysopygus</name>
    <dbReference type="NCBI Taxonomy" id="58710"/>
    <lineage>
        <taxon>Eukaryota</taxon>
        <taxon>Metazoa</taxon>
        <taxon>Chordata</taxon>
        <taxon>Craniata</taxon>
        <taxon>Vertebrata</taxon>
        <taxon>Euteleostomi</taxon>
        <taxon>Mammalia</taxon>
        <taxon>Eutheria</taxon>
        <taxon>Euarchontoglires</taxon>
        <taxon>Primates</taxon>
        <taxon>Haplorrhini</taxon>
        <taxon>Platyrrhini</taxon>
        <taxon>Cebidae</taxon>
        <taxon>Callitrichinae</taxon>
        <taxon>Leontopithecus</taxon>
    </lineage>
</organism>
<comment type="function">
    <text evidence="1">Receptor for MSH (alpha, beta and gamma) and ACTH. The activity of this receptor is mediated by G proteins which activate adenylate cyclase. Mediates melanogenesis, the production of eumelanin (black/brown) and phaeomelanin (red/yellow), via regulation of cAMP signaling in melanocytes.</text>
</comment>
<comment type="subunit">
    <text evidence="1">Interacts with MGRN1, but does not undergo MGRN1-mediated ubiquitination; this interaction competes with GNAS-binding and thus inhibits agonist-induced cAMP production. Interacts with OPN3; the interaction results in a decrease in MC1R-mediated cAMP signaling and ultimately a decrease in melanin production in melanocytes.</text>
</comment>
<comment type="subcellular location">
    <subcellularLocation>
        <location evidence="1">Cell membrane</location>
        <topology evidence="2">Multi-pass membrane protein</topology>
    </subcellularLocation>
</comment>
<comment type="similarity">
    <text evidence="3">Belongs to the G-protein coupled receptor 1 family.</text>
</comment>
<proteinExistence type="inferred from homology"/>
<keyword id="KW-1003">Cell membrane</keyword>
<keyword id="KW-0297">G-protein coupled receptor</keyword>
<keyword id="KW-0325">Glycoprotein</keyword>
<keyword id="KW-0472">Membrane</keyword>
<keyword id="KW-0675">Receptor</keyword>
<keyword id="KW-0807">Transducer</keyword>
<keyword id="KW-0812">Transmembrane</keyword>
<keyword id="KW-1133">Transmembrane helix</keyword>
<sequence>MPMQGAQRKLLGSLNSTPTATSNLGLAANRTGAPCLELPIPNGLFLSLGLVSLVENVLVVAAIAKNRNLHSSMYCFICCLALSDLLVSGSNMLETAVILLLEAGVLATRASVVQQLHNTIDVLTCSSMLCSLCFLGAIAVDRYISIFYALRYHSIMTLPRAQRAVAAIWVASVLSSTLFITYYDHAAVLLCLMVFFLAMLVLMAVLYVHMLARARQHAQGIIRLHKRQPPAHKGFGLRGAATLTILLGIFFLCWGPFFLCLTLVVFCPQHLTCNCIFKNFKVFLTLIICNTIIDPLIYAFRSQELRRMLKEVLGRGRW</sequence>
<feature type="chain" id="PRO_0000069823" description="Melanocyte-stimulating hormone receptor">
    <location>
        <begin position="1"/>
        <end position="318"/>
    </location>
</feature>
<feature type="topological domain" description="Extracellular" evidence="2">
    <location>
        <begin position="1"/>
        <end position="37"/>
    </location>
</feature>
<feature type="transmembrane region" description="Helical; Name=1" evidence="2">
    <location>
        <begin position="38"/>
        <end position="63"/>
    </location>
</feature>
<feature type="topological domain" description="Cytoplasmic" evidence="2">
    <location>
        <begin position="64"/>
        <end position="72"/>
    </location>
</feature>
<feature type="transmembrane region" description="Helical; Name=2" evidence="2">
    <location>
        <begin position="73"/>
        <end position="93"/>
    </location>
</feature>
<feature type="topological domain" description="Extracellular" evidence="2">
    <location>
        <begin position="94"/>
        <end position="118"/>
    </location>
</feature>
<feature type="transmembrane region" description="Helical; Name=3" evidence="2">
    <location>
        <begin position="119"/>
        <end position="140"/>
    </location>
</feature>
<feature type="topological domain" description="Cytoplasmic" evidence="2">
    <location>
        <begin position="141"/>
        <end position="163"/>
    </location>
</feature>
<feature type="transmembrane region" description="Helical; Name=4" evidence="2">
    <location>
        <begin position="164"/>
        <end position="183"/>
    </location>
</feature>
<feature type="topological domain" description="Extracellular" evidence="2">
    <location>
        <begin position="184"/>
        <end position="191"/>
    </location>
</feature>
<feature type="transmembrane region" description="Helical; Name=5" evidence="2">
    <location>
        <begin position="192"/>
        <end position="211"/>
    </location>
</feature>
<feature type="topological domain" description="Cytoplasmic" evidence="2">
    <location>
        <begin position="212"/>
        <end position="240"/>
    </location>
</feature>
<feature type="transmembrane region" description="Helical; Name=6" evidence="2">
    <location>
        <begin position="241"/>
        <end position="266"/>
    </location>
</feature>
<feature type="topological domain" description="Extracellular" evidence="2">
    <location>
        <begin position="267"/>
        <end position="279"/>
    </location>
</feature>
<feature type="transmembrane region" description="Helical; Name=7" evidence="2">
    <location>
        <begin position="280"/>
        <end position="300"/>
    </location>
</feature>
<feature type="topological domain" description="Cytoplasmic" evidence="2">
    <location>
        <begin position="301"/>
        <end position="318"/>
    </location>
</feature>
<feature type="glycosylation site" description="N-linked (GlcNAc...) asparagine" evidence="2">
    <location>
        <position position="29"/>
    </location>
</feature>
<name>MSHR_LEOCH</name>
<dbReference type="EMBL" id="AY205115">
    <property type="protein sequence ID" value="AAP30989.1"/>
    <property type="molecule type" value="Genomic_DNA"/>
</dbReference>
<dbReference type="SMR" id="Q864I2"/>
<dbReference type="GlyCosmos" id="Q864I2">
    <property type="glycosylation" value="1 site, No reported glycans"/>
</dbReference>
<dbReference type="GO" id="GO:0005886">
    <property type="term" value="C:plasma membrane"/>
    <property type="evidence" value="ECO:0000250"/>
    <property type="project" value="UniProtKB"/>
</dbReference>
<dbReference type="GO" id="GO:0004980">
    <property type="term" value="F:melanocyte-stimulating hormone receptor activity"/>
    <property type="evidence" value="ECO:0007669"/>
    <property type="project" value="InterPro"/>
</dbReference>
<dbReference type="GO" id="GO:0007189">
    <property type="term" value="P:adenylate cyclase-activating G protein-coupled receptor signaling pathway"/>
    <property type="evidence" value="ECO:0007669"/>
    <property type="project" value="UniProtKB-ARBA"/>
</dbReference>
<dbReference type="FunFam" id="1.20.1070.10:FF:000211">
    <property type="entry name" value="Melanocyte-stimulating hormone receptor"/>
    <property type="match status" value="1"/>
</dbReference>
<dbReference type="Gene3D" id="1.20.1070.10">
    <property type="entry name" value="Rhodopsin 7-helix transmembrane proteins"/>
    <property type="match status" value="1"/>
</dbReference>
<dbReference type="InterPro" id="IPR000276">
    <property type="entry name" value="GPCR_Rhodpsn"/>
</dbReference>
<dbReference type="InterPro" id="IPR017452">
    <property type="entry name" value="GPCR_Rhodpsn_7TM"/>
</dbReference>
<dbReference type="InterPro" id="IPR001671">
    <property type="entry name" value="Melcrt_ACTH_rcpt"/>
</dbReference>
<dbReference type="InterPro" id="IPR000761">
    <property type="entry name" value="MSH_rcpt"/>
</dbReference>
<dbReference type="PANTHER" id="PTHR22750">
    <property type="entry name" value="G-PROTEIN COUPLED RECEPTOR"/>
    <property type="match status" value="1"/>
</dbReference>
<dbReference type="Pfam" id="PF00001">
    <property type="entry name" value="7tm_1"/>
    <property type="match status" value="1"/>
</dbReference>
<dbReference type="PRINTS" id="PR00237">
    <property type="entry name" value="GPCRRHODOPSN"/>
</dbReference>
<dbReference type="PRINTS" id="PR00534">
    <property type="entry name" value="MCRFAMILY"/>
</dbReference>
<dbReference type="PRINTS" id="PR00536">
    <property type="entry name" value="MELNOCYTESHR"/>
</dbReference>
<dbReference type="SMART" id="SM01381">
    <property type="entry name" value="7TM_GPCR_Srsx"/>
    <property type="match status" value="1"/>
</dbReference>
<dbReference type="SUPFAM" id="SSF81321">
    <property type="entry name" value="Family A G protein-coupled receptor-like"/>
    <property type="match status" value="1"/>
</dbReference>
<dbReference type="PROSITE" id="PS00237">
    <property type="entry name" value="G_PROTEIN_RECEP_F1_1"/>
    <property type="match status" value="1"/>
</dbReference>
<dbReference type="PROSITE" id="PS50262">
    <property type="entry name" value="G_PROTEIN_RECEP_F1_2"/>
    <property type="match status" value="1"/>
</dbReference>
<gene>
    <name type="primary">MC1R</name>
</gene>
<evidence type="ECO:0000250" key="1">
    <source>
        <dbReference type="UniProtKB" id="Q01726"/>
    </source>
</evidence>
<evidence type="ECO:0000255" key="2"/>
<evidence type="ECO:0000255" key="3">
    <source>
        <dbReference type="PROSITE-ProRule" id="PRU00521"/>
    </source>
</evidence>
<reference key="1">
    <citation type="journal article" date="2003" name="Am. J. Phys. Anthropol.">
        <title>Evolution of a pigmentation gene, the melanocortin-1 receptor, in primates.</title>
        <authorList>
            <person name="Mundy N.I."/>
            <person name="Kelly J."/>
        </authorList>
    </citation>
    <scope>NUCLEOTIDE SEQUENCE [GENOMIC DNA]</scope>
    <source>
        <strain>Isolate 2</strain>
    </source>
</reference>